<name>CYB_PIPNA</name>
<sequence>MXNIRKSHPLIKIVNDSFIDLPAPSNISAWWNFGSLLGVCLALQIVTGLFLAMHYTSDTATAFSSVTHICRDVNHGWVLRYLHANGASMFFICLYLHVGRGLYYGSYMFKETWNMGVILLFAVMATAFMGYVLPWGQMSFWGATVITNLLSAIPYIGTDLVEWIWGGFSVDKATLTRFFAFHFLLPFIISALVMVHLLFLHETGSNNPTGIPSNMDMIPFHPYYTIKDILGLFMMILVLLSLVMFSPDMLGDPDNYTPANPLSTPPHIKPEWYFLFAYAILRSIPNKLGGVLALVLSILILIFIPFLHTSKQRSMTFRPISQCLFWLLTADLLTLTWIGGQPVEHPYVIIGQLASILYFLTILVIMPLASLAENHLLKW</sequence>
<gene>
    <name type="primary">MT-CYB</name>
    <name type="synonym">COB</name>
    <name type="synonym">CYTB</name>
    <name type="synonym">MTCYB</name>
</gene>
<evidence type="ECO:0000250" key="1"/>
<evidence type="ECO:0000250" key="2">
    <source>
        <dbReference type="UniProtKB" id="P00157"/>
    </source>
</evidence>
<evidence type="ECO:0000255" key="3">
    <source>
        <dbReference type="PROSITE-ProRule" id="PRU00967"/>
    </source>
</evidence>
<evidence type="ECO:0000255" key="4">
    <source>
        <dbReference type="PROSITE-ProRule" id="PRU00968"/>
    </source>
</evidence>
<accession>O21220</accession>
<accession>O21219</accession>
<accession>Q7YD77</accession>
<keyword id="KW-0249">Electron transport</keyword>
<keyword id="KW-0349">Heme</keyword>
<keyword id="KW-0408">Iron</keyword>
<keyword id="KW-0472">Membrane</keyword>
<keyword id="KW-0479">Metal-binding</keyword>
<keyword id="KW-0496">Mitochondrion</keyword>
<keyword id="KW-0999">Mitochondrion inner membrane</keyword>
<keyword id="KW-0679">Respiratory chain</keyword>
<keyword id="KW-0812">Transmembrane</keyword>
<keyword id="KW-1133">Transmembrane helix</keyword>
<keyword id="KW-0813">Transport</keyword>
<keyword id="KW-0830">Ubiquinone</keyword>
<organism>
    <name type="scientific">Pipistrellus nathusii</name>
    <name type="common">Nathusius' pipistrelle</name>
    <dbReference type="NCBI Taxonomy" id="59473"/>
    <lineage>
        <taxon>Eukaryota</taxon>
        <taxon>Metazoa</taxon>
        <taxon>Chordata</taxon>
        <taxon>Craniata</taxon>
        <taxon>Vertebrata</taxon>
        <taxon>Euteleostomi</taxon>
        <taxon>Mammalia</taxon>
        <taxon>Eutheria</taxon>
        <taxon>Laurasiatheria</taxon>
        <taxon>Chiroptera</taxon>
        <taxon>Yangochiroptera</taxon>
        <taxon>Vespertilionidae</taxon>
        <taxon>Pipistrellus</taxon>
    </lineage>
</organism>
<comment type="function">
    <text evidence="2">Component of the ubiquinol-cytochrome c reductase complex (complex III or cytochrome b-c1 complex) that is part of the mitochondrial respiratory chain. The b-c1 complex mediates electron transfer from ubiquinol to cytochrome c. Contributes to the generation of a proton gradient across the mitochondrial membrane that is then used for ATP synthesis.</text>
</comment>
<comment type="cofactor">
    <cofactor evidence="2">
        <name>heme b</name>
        <dbReference type="ChEBI" id="CHEBI:60344"/>
    </cofactor>
    <text evidence="2">Binds 2 heme b groups non-covalently.</text>
</comment>
<comment type="subunit">
    <text evidence="2">The cytochrome bc1 complex contains 11 subunits: 3 respiratory subunits (MT-CYB, CYC1 and UQCRFS1), 2 core proteins (UQCRC1 and UQCRC2) and 6 low-molecular weight proteins (UQCRH/QCR6, UQCRB/QCR7, UQCRQ/QCR8, UQCR10/QCR9, UQCR11/QCR10 and a cleavage product of UQCRFS1). This cytochrome bc1 complex then forms a dimer.</text>
</comment>
<comment type="subcellular location">
    <subcellularLocation>
        <location evidence="2">Mitochondrion inner membrane</location>
        <topology evidence="2">Multi-pass membrane protein</topology>
    </subcellularLocation>
</comment>
<comment type="miscellaneous">
    <text evidence="1">Heme 1 (or BL or b562) is low-potential and absorbs at about 562 nm, and heme 2 (or BH or b566) is high-potential and absorbs at about 566 nm.</text>
</comment>
<comment type="similarity">
    <text evidence="3 4">Belongs to the cytochrome b family.</text>
</comment>
<comment type="caution">
    <text evidence="2">The full-length protein contains only eight transmembrane helices, not nine as predicted by bioinformatics tools.</text>
</comment>
<dbReference type="EMBL" id="AJ504446">
    <property type="protein sequence ID" value="CAD43204.1"/>
    <property type="molecule type" value="Genomic_DNA"/>
</dbReference>
<dbReference type="EMBL" id="U95509">
    <property type="protein sequence ID" value="AAC48746.1"/>
    <property type="molecule type" value="Genomic_DNA"/>
</dbReference>
<dbReference type="EMBL" id="U95510">
    <property type="protein sequence ID" value="AAC48747.1"/>
    <property type="molecule type" value="Genomic_DNA"/>
</dbReference>
<dbReference type="GO" id="GO:0005743">
    <property type="term" value="C:mitochondrial inner membrane"/>
    <property type="evidence" value="ECO:0007669"/>
    <property type="project" value="UniProtKB-SubCell"/>
</dbReference>
<dbReference type="GO" id="GO:0045275">
    <property type="term" value="C:respiratory chain complex III"/>
    <property type="evidence" value="ECO:0007669"/>
    <property type="project" value="InterPro"/>
</dbReference>
<dbReference type="GO" id="GO:0046872">
    <property type="term" value="F:metal ion binding"/>
    <property type="evidence" value="ECO:0007669"/>
    <property type="project" value="UniProtKB-KW"/>
</dbReference>
<dbReference type="GO" id="GO:0008121">
    <property type="term" value="F:ubiquinol-cytochrome-c reductase activity"/>
    <property type="evidence" value="ECO:0007669"/>
    <property type="project" value="InterPro"/>
</dbReference>
<dbReference type="GO" id="GO:0006122">
    <property type="term" value="P:mitochondrial electron transport, ubiquinol to cytochrome c"/>
    <property type="evidence" value="ECO:0007669"/>
    <property type="project" value="TreeGrafter"/>
</dbReference>
<dbReference type="CDD" id="cd00290">
    <property type="entry name" value="cytochrome_b_C"/>
    <property type="match status" value="1"/>
</dbReference>
<dbReference type="CDD" id="cd00284">
    <property type="entry name" value="Cytochrome_b_N"/>
    <property type="match status" value="1"/>
</dbReference>
<dbReference type="FunFam" id="1.20.810.10:FF:000002">
    <property type="entry name" value="Cytochrome b"/>
    <property type="match status" value="1"/>
</dbReference>
<dbReference type="Gene3D" id="1.20.810.10">
    <property type="entry name" value="Cytochrome Bc1 Complex, Chain C"/>
    <property type="match status" value="1"/>
</dbReference>
<dbReference type="InterPro" id="IPR005798">
    <property type="entry name" value="Cyt_b/b6_C"/>
</dbReference>
<dbReference type="InterPro" id="IPR036150">
    <property type="entry name" value="Cyt_b/b6_C_sf"/>
</dbReference>
<dbReference type="InterPro" id="IPR005797">
    <property type="entry name" value="Cyt_b/b6_N"/>
</dbReference>
<dbReference type="InterPro" id="IPR027387">
    <property type="entry name" value="Cytb/b6-like_sf"/>
</dbReference>
<dbReference type="InterPro" id="IPR030689">
    <property type="entry name" value="Cytochrome_b"/>
</dbReference>
<dbReference type="InterPro" id="IPR048260">
    <property type="entry name" value="Cytochrome_b_C_euk/bac"/>
</dbReference>
<dbReference type="InterPro" id="IPR048259">
    <property type="entry name" value="Cytochrome_b_N_euk/bac"/>
</dbReference>
<dbReference type="InterPro" id="IPR016174">
    <property type="entry name" value="Di-haem_cyt_TM"/>
</dbReference>
<dbReference type="PANTHER" id="PTHR19271">
    <property type="entry name" value="CYTOCHROME B"/>
    <property type="match status" value="1"/>
</dbReference>
<dbReference type="PANTHER" id="PTHR19271:SF16">
    <property type="entry name" value="CYTOCHROME B"/>
    <property type="match status" value="1"/>
</dbReference>
<dbReference type="Pfam" id="PF00032">
    <property type="entry name" value="Cytochrom_B_C"/>
    <property type="match status" value="1"/>
</dbReference>
<dbReference type="Pfam" id="PF00033">
    <property type="entry name" value="Cytochrome_B"/>
    <property type="match status" value="1"/>
</dbReference>
<dbReference type="PIRSF" id="PIRSF038885">
    <property type="entry name" value="COB"/>
    <property type="match status" value="1"/>
</dbReference>
<dbReference type="SUPFAM" id="SSF81648">
    <property type="entry name" value="a domain/subunit of cytochrome bc1 complex (Ubiquinol-cytochrome c reductase)"/>
    <property type="match status" value="1"/>
</dbReference>
<dbReference type="SUPFAM" id="SSF81342">
    <property type="entry name" value="Transmembrane di-heme cytochromes"/>
    <property type="match status" value="1"/>
</dbReference>
<dbReference type="PROSITE" id="PS51003">
    <property type="entry name" value="CYTB_CTER"/>
    <property type="match status" value="1"/>
</dbReference>
<dbReference type="PROSITE" id="PS51002">
    <property type="entry name" value="CYTB_NTER"/>
    <property type="match status" value="1"/>
</dbReference>
<feature type="chain" id="PRO_0000061401" description="Cytochrome b">
    <location>
        <begin position="1"/>
        <end position="379"/>
    </location>
</feature>
<feature type="transmembrane region" description="Helical" evidence="2">
    <location>
        <begin position="33"/>
        <end position="53"/>
    </location>
</feature>
<feature type="transmembrane region" description="Helical" evidence="2">
    <location>
        <begin position="77"/>
        <end position="98"/>
    </location>
</feature>
<feature type="transmembrane region" description="Helical" evidence="2">
    <location>
        <begin position="113"/>
        <end position="133"/>
    </location>
</feature>
<feature type="transmembrane region" description="Helical" evidence="2">
    <location>
        <begin position="178"/>
        <end position="198"/>
    </location>
</feature>
<feature type="transmembrane region" description="Helical" evidence="2">
    <location>
        <begin position="226"/>
        <end position="246"/>
    </location>
</feature>
<feature type="transmembrane region" description="Helical" evidence="2">
    <location>
        <begin position="288"/>
        <end position="308"/>
    </location>
</feature>
<feature type="transmembrane region" description="Helical" evidence="2">
    <location>
        <begin position="320"/>
        <end position="340"/>
    </location>
</feature>
<feature type="transmembrane region" description="Helical" evidence="2">
    <location>
        <begin position="347"/>
        <end position="367"/>
    </location>
</feature>
<feature type="binding site" description="axial binding residue" evidence="2">
    <location>
        <position position="83"/>
    </location>
    <ligand>
        <name>heme b</name>
        <dbReference type="ChEBI" id="CHEBI:60344"/>
        <label>b562</label>
    </ligand>
    <ligandPart>
        <name>Fe</name>
        <dbReference type="ChEBI" id="CHEBI:18248"/>
    </ligandPart>
</feature>
<feature type="binding site" description="axial binding residue" evidence="2">
    <location>
        <position position="97"/>
    </location>
    <ligand>
        <name>heme b</name>
        <dbReference type="ChEBI" id="CHEBI:60344"/>
        <label>b566</label>
    </ligand>
    <ligandPart>
        <name>Fe</name>
        <dbReference type="ChEBI" id="CHEBI:18248"/>
    </ligandPart>
</feature>
<feature type="binding site" description="axial binding residue" evidence="2">
    <location>
        <position position="182"/>
    </location>
    <ligand>
        <name>heme b</name>
        <dbReference type="ChEBI" id="CHEBI:60344"/>
        <label>b562</label>
    </ligand>
    <ligandPart>
        <name>Fe</name>
        <dbReference type="ChEBI" id="CHEBI:18248"/>
    </ligandPart>
</feature>
<feature type="binding site" description="axial binding residue" evidence="2">
    <location>
        <position position="196"/>
    </location>
    <ligand>
        <name>heme b</name>
        <dbReference type="ChEBI" id="CHEBI:60344"/>
        <label>b566</label>
    </ligand>
    <ligandPart>
        <name>Fe</name>
        <dbReference type="ChEBI" id="CHEBI:18248"/>
    </ligandPart>
</feature>
<feature type="binding site" evidence="2">
    <location>
        <position position="201"/>
    </location>
    <ligand>
        <name>a ubiquinone</name>
        <dbReference type="ChEBI" id="CHEBI:16389"/>
    </ligand>
</feature>
<proteinExistence type="inferred from homology"/>
<protein>
    <recommendedName>
        <fullName>Cytochrome b</fullName>
    </recommendedName>
    <alternativeName>
        <fullName>Complex III subunit 3</fullName>
    </alternativeName>
    <alternativeName>
        <fullName>Complex III subunit III</fullName>
    </alternativeName>
    <alternativeName>
        <fullName>Cytochrome b-c1 complex subunit 3</fullName>
    </alternativeName>
    <alternativeName>
        <fullName>Ubiquinol-cytochrome-c reductase complex cytochrome b subunit</fullName>
    </alternativeName>
</protein>
<reference key="1">
    <citation type="journal article" date="2004" name="J. Mammal.">
        <title>Molecular systematics of the fishing bat Myotis (Pizonyx) vivesi.</title>
        <authorList>
            <person name="Stadelmann B.Y."/>
            <person name="Herrera L.G."/>
            <person name="Arroyo-Cabrales J."/>
            <person name="Flores-Martinez J.J."/>
            <person name="May B.P."/>
            <person name="Ruedi M."/>
        </authorList>
    </citation>
    <scope>NUCLEOTIDE SEQUENCE [GENOMIC DNA]</scope>
    <source>
        <tissue>Wing</tissue>
    </source>
</reference>
<reference key="2">
    <citation type="journal article" date="1997" name="Nature">
        <title>DNA answers the call of pipistrelle bat species.</title>
        <authorList>
            <person name="Barratt E.M."/>
            <person name="Deaville R."/>
            <person name="Burland T.M."/>
            <person name="Bruford M.W."/>
            <person name="Jones G."/>
            <person name="Racey P.A."/>
            <person name="Wayne R.K."/>
        </authorList>
    </citation>
    <scope>NUCLEOTIDE SEQUENCE [GENOMIC DNA] OF 9-119 AND 282-379</scope>
</reference>
<geneLocation type="mitochondrion"/>